<evidence type="ECO:0000255" key="1">
    <source>
        <dbReference type="HAMAP-Rule" id="MF_00006"/>
    </source>
</evidence>
<evidence type="ECO:0000256" key="2">
    <source>
        <dbReference type="SAM" id="MobiDB-lite"/>
    </source>
</evidence>
<comment type="catalytic activity">
    <reaction evidence="1">
        <text>2-(N(omega)-L-arginino)succinate = fumarate + L-arginine</text>
        <dbReference type="Rhea" id="RHEA:24020"/>
        <dbReference type="ChEBI" id="CHEBI:29806"/>
        <dbReference type="ChEBI" id="CHEBI:32682"/>
        <dbReference type="ChEBI" id="CHEBI:57472"/>
        <dbReference type="EC" id="4.3.2.1"/>
    </reaction>
</comment>
<comment type="pathway">
    <text evidence="1">Amino-acid biosynthesis; L-arginine biosynthesis; L-arginine from L-ornithine and carbamoyl phosphate: step 3/3.</text>
</comment>
<comment type="subcellular location">
    <subcellularLocation>
        <location evidence="1">Cytoplasm</location>
    </subcellularLocation>
</comment>
<comment type="similarity">
    <text evidence="1">Belongs to the lyase 1 family. Argininosuccinate lyase subfamily.</text>
</comment>
<feature type="chain" id="PRO_0000240793" description="Argininosuccinate lyase">
    <location>
        <begin position="1"/>
        <end position="490"/>
    </location>
</feature>
<feature type="region of interest" description="Disordered" evidence="2">
    <location>
        <begin position="426"/>
        <end position="452"/>
    </location>
</feature>
<feature type="region of interest" description="Disordered" evidence="2">
    <location>
        <begin position="469"/>
        <end position="490"/>
    </location>
</feature>
<feature type="compositionally biased region" description="Low complexity" evidence="2">
    <location>
        <begin position="440"/>
        <end position="452"/>
    </location>
</feature>
<feature type="compositionally biased region" description="Basic and acidic residues" evidence="2">
    <location>
        <begin position="469"/>
        <end position="480"/>
    </location>
</feature>
<dbReference type="EC" id="4.3.2.1" evidence="1"/>
<dbReference type="EMBL" id="CR936257">
    <property type="protein sequence ID" value="CAI50718.1"/>
    <property type="molecule type" value="Genomic_DNA"/>
</dbReference>
<dbReference type="RefSeq" id="WP_011324327.1">
    <property type="nucleotide sequence ID" value="NC_007426.1"/>
</dbReference>
<dbReference type="SMR" id="Q3IME1"/>
<dbReference type="STRING" id="348780.NP_5254A"/>
<dbReference type="EnsemblBacteria" id="CAI50718">
    <property type="protein sequence ID" value="CAI50718"/>
    <property type="gene ID" value="NP_5254A"/>
</dbReference>
<dbReference type="GeneID" id="3702522"/>
<dbReference type="KEGG" id="nph:NP_5254A"/>
<dbReference type="eggNOG" id="arCOG01748">
    <property type="taxonomic scope" value="Archaea"/>
</dbReference>
<dbReference type="HOGENOM" id="CLU_027272_2_3_2"/>
<dbReference type="OrthoDB" id="27337at2157"/>
<dbReference type="UniPathway" id="UPA00068">
    <property type="reaction ID" value="UER00114"/>
</dbReference>
<dbReference type="Proteomes" id="UP000002698">
    <property type="component" value="Chromosome"/>
</dbReference>
<dbReference type="GO" id="GO:0005829">
    <property type="term" value="C:cytosol"/>
    <property type="evidence" value="ECO:0007669"/>
    <property type="project" value="TreeGrafter"/>
</dbReference>
<dbReference type="GO" id="GO:0004056">
    <property type="term" value="F:argininosuccinate lyase activity"/>
    <property type="evidence" value="ECO:0007669"/>
    <property type="project" value="UniProtKB-UniRule"/>
</dbReference>
<dbReference type="GO" id="GO:0042450">
    <property type="term" value="P:arginine biosynthetic process via ornithine"/>
    <property type="evidence" value="ECO:0007669"/>
    <property type="project" value="InterPro"/>
</dbReference>
<dbReference type="GO" id="GO:0006526">
    <property type="term" value="P:L-arginine biosynthetic process"/>
    <property type="evidence" value="ECO:0007669"/>
    <property type="project" value="UniProtKB-UniRule"/>
</dbReference>
<dbReference type="CDD" id="cd01359">
    <property type="entry name" value="Argininosuccinate_lyase"/>
    <property type="match status" value="1"/>
</dbReference>
<dbReference type="FunFam" id="1.20.200.10:FF:000015">
    <property type="entry name" value="argininosuccinate lyase isoform X2"/>
    <property type="match status" value="1"/>
</dbReference>
<dbReference type="Gene3D" id="1.10.40.30">
    <property type="entry name" value="Fumarase/aspartase (C-terminal domain)"/>
    <property type="match status" value="1"/>
</dbReference>
<dbReference type="Gene3D" id="1.20.200.10">
    <property type="entry name" value="Fumarase/aspartase (Central domain)"/>
    <property type="match status" value="1"/>
</dbReference>
<dbReference type="Gene3D" id="1.10.275.10">
    <property type="entry name" value="Fumarase/aspartase (N-terminal domain)"/>
    <property type="match status" value="1"/>
</dbReference>
<dbReference type="HAMAP" id="MF_00006">
    <property type="entry name" value="Arg_succ_lyase"/>
    <property type="match status" value="1"/>
</dbReference>
<dbReference type="InterPro" id="IPR029419">
    <property type="entry name" value="Arg_succ_lyase_C"/>
</dbReference>
<dbReference type="InterPro" id="IPR009049">
    <property type="entry name" value="Argininosuccinate_lyase"/>
</dbReference>
<dbReference type="InterPro" id="IPR024083">
    <property type="entry name" value="Fumarase/histidase_N"/>
</dbReference>
<dbReference type="InterPro" id="IPR000362">
    <property type="entry name" value="Fumarate_lyase_fam"/>
</dbReference>
<dbReference type="InterPro" id="IPR022761">
    <property type="entry name" value="Fumarate_lyase_N"/>
</dbReference>
<dbReference type="InterPro" id="IPR008948">
    <property type="entry name" value="L-Aspartase-like"/>
</dbReference>
<dbReference type="NCBIfam" id="TIGR00838">
    <property type="entry name" value="argH"/>
    <property type="match status" value="1"/>
</dbReference>
<dbReference type="PANTHER" id="PTHR43814">
    <property type="entry name" value="ARGININOSUCCINATE LYASE"/>
    <property type="match status" value="1"/>
</dbReference>
<dbReference type="PANTHER" id="PTHR43814:SF1">
    <property type="entry name" value="ARGININOSUCCINATE LYASE"/>
    <property type="match status" value="1"/>
</dbReference>
<dbReference type="Pfam" id="PF14698">
    <property type="entry name" value="ASL_C2"/>
    <property type="match status" value="1"/>
</dbReference>
<dbReference type="Pfam" id="PF00206">
    <property type="entry name" value="Lyase_1"/>
    <property type="match status" value="1"/>
</dbReference>
<dbReference type="PRINTS" id="PR00145">
    <property type="entry name" value="ARGSUCLYASE"/>
</dbReference>
<dbReference type="PRINTS" id="PR00149">
    <property type="entry name" value="FUMRATELYASE"/>
</dbReference>
<dbReference type="SUPFAM" id="SSF48557">
    <property type="entry name" value="L-aspartase-like"/>
    <property type="match status" value="1"/>
</dbReference>
<keyword id="KW-0028">Amino-acid biosynthesis</keyword>
<keyword id="KW-0055">Arginine biosynthesis</keyword>
<keyword id="KW-0963">Cytoplasm</keyword>
<keyword id="KW-0456">Lyase</keyword>
<keyword id="KW-1185">Reference proteome</keyword>
<name>ARLY_NATPD</name>
<proteinExistence type="inferred from homology"/>
<protein>
    <recommendedName>
        <fullName evidence="1">Argininosuccinate lyase</fullName>
        <shortName evidence="1">ASAL</shortName>
        <ecNumber evidence="1">4.3.2.1</ecNumber>
    </recommendedName>
    <alternativeName>
        <fullName evidence="1">Arginosuccinase</fullName>
    </alternativeName>
</protein>
<gene>
    <name evidence="1" type="primary">argH</name>
    <name type="ordered locus">NP_5254A</name>
</gene>
<accession>Q3IME1</accession>
<sequence>MTGDADEGRDVVRRDRFSGGPARGFLSSLAADERIFEADLAVDRAHVVMLDEQDIIGTDDAAAILGALDDVEAAGHGSLTDGEDVHAAIETAVIERVGDRGGKMHTARSRNDEVAACIRYRLREDVLAAVEATLEAREMLLDVAGDHTETVMPGFTHLQPAQPTTVAHYLHSYASALARDTERLLDAYGRINRSPLGAAAFAGTPFDIDRERTAELLGFDGVVRNSMDAASARDFLVETTAAAAGLATTLSGLAEDLVVFSKAGYVELDDAYASTSSIMPQKKNPDTMELVRATAGDTAAGLNALLTILKGLPRAYNRDLQRAHPHAFEALDAVTEATEVAAGAVATADWKEPALSEAAGEGFSTATGVADLLAMEGVPFRTAHELVARAAEAGGDYAALSAAAEDILGGPLSEHVDKAAVEAALDPESSVASRDSLGGPAPESMAAALSAAGQRLDADAEALRERRGALATAADERERVVSSYDSTAPE</sequence>
<reference key="1">
    <citation type="journal article" date="2005" name="Genome Res.">
        <title>Living with two extremes: conclusions from the genome sequence of Natronomonas pharaonis.</title>
        <authorList>
            <person name="Falb M."/>
            <person name="Pfeiffer F."/>
            <person name="Palm P."/>
            <person name="Rodewald K."/>
            <person name="Hickmann V."/>
            <person name="Tittor J."/>
            <person name="Oesterhelt D."/>
        </authorList>
    </citation>
    <scope>NUCLEOTIDE SEQUENCE [LARGE SCALE GENOMIC DNA]</scope>
    <source>
        <strain>ATCC 35678 / DSM 2160 / CIP 103997 / JCM 8858 / NBRC 14720 / NCIMB 2260 / Gabara</strain>
    </source>
</reference>
<organism>
    <name type="scientific">Natronomonas pharaonis (strain ATCC 35678 / DSM 2160 / CIP 103997 / JCM 8858 / NBRC 14720 / NCIMB 2260 / Gabara)</name>
    <name type="common">Halobacterium pharaonis</name>
    <dbReference type="NCBI Taxonomy" id="348780"/>
    <lineage>
        <taxon>Archaea</taxon>
        <taxon>Methanobacteriati</taxon>
        <taxon>Methanobacteriota</taxon>
        <taxon>Stenosarchaea group</taxon>
        <taxon>Halobacteria</taxon>
        <taxon>Halobacteriales</taxon>
        <taxon>Haloarculaceae</taxon>
        <taxon>Natronomonas</taxon>
    </lineage>
</organism>